<sequence>MRCPFCGHAESQVKDSRPSEDGAAIRRRRMCPECGGRFTTFERVQLRELIIVKRSGRRSPFDRDKLVRSVGLATQKRPVDPERVERMVNGIVRQLESMGETELPSSTVGEMVMKALKSLDDVAYVRYASVYRDFKETSDFAKFLTEEGLSDGGEEEL</sequence>
<feature type="chain" id="PRO_1000191784" description="Transcriptional repressor NrdR">
    <location>
        <begin position="1"/>
        <end position="157"/>
    </location>
</feature>
<feature type="domain" description="ATP-cone" evidence="1">
    <location>
        <begin position="49"/>
        <end position="139"/>
    </location>
</feature>
<feature type="zinc finger region" evidence="1">
    <location>
        <begin position="3"/>
        <end position="34"/>
    </location>
</feature>
<organism>
    <name type="scientific">Caulobacter vibrioides (strain NA1000 / CB15N)</name>
    <name type="common">Caulobacter crescentus</name>
    <dbReference type="NCBI Taxonomy" id="565050"/>
    <lineage>
        <taxon>Bacteria</taxon>
        <taxon>Pseudomonadati</taxon>
        <taxon>Pseudomonadota</taxon>
        <taxon>Alphaproteobacteria</taxon>
        <taxon>Caulobacterales</taxon>
        <taxon>Caulobacteraceae</taxon>
        <taxon>Caulobacter</taxon>
    </lineage>
</organism>
<accession>B8H533</accession>
<keyword id="KW-0067">ATP-binding</keyword>
<keyword id="KW-0238">DNA-binding</keyword>
<keyword id="KW-0479">Metal-binding</keyword>
<keyword id="KW-0547">Nucleotide-binding</keyword>
<keyword id="KW-1185">Reference proteome</keyword>
<keyword id="KW-0678">Repressor</keyword>
<keyword id="KW-0804">Transcription</keyword>
<keyword id="KW-0805">Transcription regulation</keyword>
<keyword id="KW-0862">Zinc</keyword>
<keyword id="KW-0863">Zinc-finger</keyword>
<proteinExistence type="inferred from homology"/>
<gene>
    <name evidence="1" type="primary">nrdR</name>
    <name type="ordered locus">CCNA_01420</name>
</gene>
<reference key="1">
    <citation type="journal article" date="2010" name="J. Bacteriol.">
        <title>The genetic basis of laboratory adaptation in Caulobacter crescentus.</title>
        <authorList>
            <person name="Marks M.E."/>
            <person name="Castro-Rojas C.M."/>
            <person name="Teiling C."/>
            <person name="Du L."/>
            <person name="Kapatral V."/>
            <person name="Walunas T.L."/>
            <person name="Crosson S."/>
        </authorList>
    </citation>
    <scope>NUCLEOTIDE SEQUENCE [LARGE SCALE GENOMIC DNA]</scope>
    <source>
        <strain>NA1000 / CB15N</strain>
    </source>
</reference>
<name>NRDR_CAUVN</name>
<evidence type="ECO:0000255" key="1">
    <source>
        <dbReference type="HAMAP-Rule" id="MF_00440"/>
    </source>
</evidence>
<protein>
    <recommendedName>
        <fullName evidence="1">Transcriptional repressor NrdR</fullName>
    </recommendedName>
</protein>
<comment type="function">
    <text evidence="1">Negatively regulates transcription of bacterial ribonucleotide reductase nrd genes and operons by binding to NrdR-boxes.</text>
</comment>
<comment type="cofactor">
    <cofactor evidence="1">
        <name>Zn(2+)</name>
        <dbReference type="ChEBI" id="CHEBI:29105"/>
    </cofactor>
    <text evidence="1">Binds 1 zinc ion.</text>
</comment>
<comment type="similarity">
    <text evidence="1">Belongs to the NrdR family.</text>
</comment>
<dbReference type="EMBL" id="CP001340">
    <property type="protein sequence ID" value="ACL94885.1"/>
    <property type="molecule type" value="Genomic_DNA"/>
</dbReference>
<dbReference type="RefSeq" id="WP_010919235.1">
    <property type="nucleotide sequence ID" value="NC_011916.1"/>
</dbReference>
<dbReference type="RefSeq" id="YP_002516793.1">
    <property type="nucleotide sequence ID" value="NC_011916.1"/>
</dbReference>
<dbReference type="SMR" id="B8H533"/>
<dbReference type="GeneID" id="7330149"/>
<dbReference type="KEGG" id="ccs:CCNA_01420"/>
<dbReference type="PATRIC" id="fig|565050.3.peg.1406"/>
<dbReference type="HOGENOM" id="CLU_108412_0_1_5"/>
<dbReference type="OrthoDB" id="9807461at2"/>
<dbReference type="PhylomeDB" id="B8H533"/>
<dbReference type="Proteomes" id="UP000001364">
    <property type="component" value="Chromosome"/>
</dbReference>
<dbReference type="GO" id="GO:0005524">
    <property type="term" value="F:ATP binding"/>
    <property type="evidence" value="ECO:0007669"/>
    <property type="project" value="UniProtKB-KW"/>
</dbReference>
<dbReference type="GO" id="GO:0003677">
    <property type="term" value="F:DNA binding"/>
    <property type="evidence" value="ECO:0007669"/>
    <property type="project" value="UniProtKB-KW"/>
</dbReference>
<dbReference type="GO" id="GO:0008270">
    <property type="term" value="F:zinc ion binding"/>
    <property type="evidence" value="ECO:0007669"/>
    <property type="project" value="UniProtKB-UniRule"/>
</dbReference>
<dbReference type="GO" id="GO:0045892">
    <property type="term" value="P:negative regulation of DNA-templated transcription"/>
    <property type="evidence" value="ECO:0007669"/>
    <property type="project" value="UniProtKB-UniRule"/>
</dbReference>
<dbReference type="HAMAP" id="MF_00440">
    <property type="entry name" value="NrdR"/>
    <property type="match status" value="1"/>
</dbReference>
<dbReference type="InterPro" id="IPR005144">
    <property type="entry name" value="ATP-cone_dom"/>
</dbReference>
<dbReference type="InterPro" id="IPR055173">
    <property type="entry name" value="NrdR-like_N"/>
</dbReference>
<dbReference type="InterPro" id="IPR003796">
    <property type="entry name" value="RNR_NrdR-like"/>
</dbReference>
<dbReference type="NCBIfam" id="TIGR00244">
    <property type="entry name" value="transcriptional regulator NrdR"/>
    <property type="match status" value="1"/>
</dbReference>
<dbReference type="PANTHER" id="PTHR30455">
    <property type="entry name" value="TRANSCRIPTIONAL REPRESSOR NRDR"/>
    <property type="match status" value="1"/>
</dbReference>
<dbReference type="PANTHER" id="PTHR30455:SF2">
    <property type="entry name" value="TRANSCRIPTIONAL REPRESSOR NRDR"/>
    <property type="match status" value="1"/>
</dbReference>
<dbReference type="Pfam" id="PF03477">
    <property type="entry name" value="ATP-cone"/>
    <property type="match status" value="1"/>
</dbReference>
<dbReference type="Pfam" id="PF22811">
    <property type="entry name" value="Zn_ribbon_NrdR"/>
    <property type="match status" value="1"/>
</dbReference>
<dbReference type="PROSITE" id="PS51161">
    <property type="entry name" value="ATP_CONE"/>
    <property type="match status" value="1"/>
</dbReference>